<protein>
    <recommendedName>
        <fullName evidence="1">Small ribosomal subunit protein uS5</fullName>
    </recommendedName>
    <alternativeName>
        <fullName evidence="2">30S ribosomal protein S5</fullName>
    </alternativeName>
</protein>
<organism>
    <name type="scientific">Bacillus cereus (strain ATCC 14579 / DSM 31 / CCUG 7414 / JCM 2152 / NBRC 15305 / NCIMB 9373 / NCTC 2599 / NRRL B-3711)</name>
    <dbReference type="NCBI Taxonomy" id="226900"/>
    <lineage>
        <taxon>Bacteria</taxon>
        <taxon>Bacillati</taxon>
        <taxon>Bacillota</taxon>
        <taxon>Bacilli</taxon>
        <taxon>Bacillales</taxon>
        <taxon>Bacillaceae</taxon>
        <taxon>Bacillus</taxon>
        <taxon>Bacillus cereus group</taxon>
    </lineage>
</organism>
<accession>Q81J25</accession>
<evidence type="ECO:0000255" key="1">
    <source>
        <dbReference type="HAMAP-Rule" id="MF_01307"/>
    </source>
</evidence>
<evidence type="ECO:0000305" key="2"/>
<name>RS5_BACCR</name>
<comment type="function">
    <text evidence="1">With S4 and S12 plays an important role in translational accuracy.</text>
</comment>
<comment type="function">
    <text evidence="1">Located at the back of the 30S subunit body where it stabilizes the conformation of the head with respect to the body.</text>
</comment>
<comment type="subunit">
    <text evidence="1">Part of the 30S ribosomal subunit. Contacts proteins S4 and S8.</text>
</comment>
<comment type="domain">
    <text>The N-terminal domain interacts with the head of the 30S subunit; the C-terminal domain interacts with the body and contacts protein S4. The interaction surface between S4 and S5 is involved in control of translational fidelity.</text>
</comment>
<comment type="similarity">
    <text evidence="1">Belongs to the universal ribosomal protein uS5 family.</text>
</comment>
<proteinExistence type="inferred from homology"/>
<reference key="1">
    <citation type="journal article" date="2003" name="Nature">
        <title>Genome sequence of Bacillus cereus and comparative analysis with Bacillus anthracis.</title>
        <authorList>
            <person name="Ivanova N."/>
            <person name="Sorokin A."/>
            <person name="Anderson I."/>
            <person name="Galleron N."/>
            <person name="Candelon B."/>
            <person name="Kapatral V."/>
            <person name="Bhattacharyya A."/>
            <person name="Reznik G."/>
            <person name="Mikhailova N."/>
            <person name="Lapidus A."/>
            <person name="Chu L."/>
            <person name="Mazur M."/>
            <person name="Goltsman E."/>
            <person name="Larsen N."/>
            <person name="D'Souza M."/>
            <person name="Walunas T."/>
            <person name="Grechkin Y."/>
            <person name="Pusch G."/>
            <person name="Haselkorn R."/>
            <person name="Fonstein M."/>
            <person name="Ehrlich S.D."/>
            <person name="Overbeek R."/>
            <person name="Kyrpides N.C."/>
        </authorList>
    </citation>
    <scope>NUCLEOTIDE SEQUENCE [LARGE SCALE GENOMIC DNA]</scope>
    <source>
        <strain>ATCC 14579 / DSM 31 / CCUG 7414 / JCM 2152 / NBRC 15305 / NCIMB 9373 / NCTC 2599 / NRRL B-3711</strain>
    </source>
</reference>
<keyword id="KW-1185">Reference proteome</keyword>
<keyword id="KW-0687">Ribonucleoprotein</keyword>
<keyword id="KW-0689">Ribosomal protein</keyword>
<keyword id="KW-0694">RNA-binding</keyword>
<keyword id="KW-0699">rRNA-binding</keyword>
<gene>
    <name evidence="1" type="primary">rpsE</name>
    <name type="ordered locus">BC_0148</name>
</gene>
<dbReference type="EMBL" id="AE016877">
    <property type="protein sequence ID" value="AAP07229.1"/>
    <property type="molecule type" value="Genomic_DNA"/>
</dbReference>
<dbReference type="RefSeq" id="NP_830028.1">
    <property type="nucleotide sequence ID" value="NC_004722.1"/>
</dbReference>
<dbReference type="SMR" id="Q81J25"/>
<dbReference type="STRING" id="226900.BC_0148"/>
<dbReference type="MetOSite" id="Q81J25"/>
<dbReference type="KEGG" id="bce:BC0148"/>
<dbReference type="PATRIC" id="fig|226900.8.peg.149"/>
<dbReference type="HOGENOM" id="CLU_065898_2_2_9"/>
<dbReference type="Proteomes" id="UP000001417">
    <property type="component" value="Chromosome"/>
</dbReference>
<dbReference type="GO" id="GO:0022627">
    <property type="term" value="C:cytosolic small ribosomal subunit"/>
    <property type="evidence" value="ECO:0000318"/>
    <property type="project" value="GO_Central"/>
</dbReference>
<dbReference type="GO" id="GO:0019843">
    <property type="term" value="F:rRNA binding"/>
    <property type="evidence" value="ECO:0007669"/>
    <property type="project" value="UniProtKB-UniRule"/>
</dbReference>
<dbReference type="GO" id="GO:0003735">
    <property type="term" value="F:structural constituent of ribosome"/>
    <property type="evidence" value="ECO:0000318"/>
    <property type="project" value="GO_Central"/>
</dbReference>
<dbReference type="GO" id="GO:0006412">
    <property type="term" value="P:translation"/>
    <property type="evidence" value="ECO:0000318"/>
    <property type="project" value="GO_Central"/>
</dbReference>
<dbReference type="FunFam" id="3.30.160.20:FF:000001">
    <property type="entry name" value="30S ribosomal protein S5"/>
    <property type="match status" value="1"/>
</dbReference>
<dbReference type="FunFam" id="3.30.230.10:FF:000002">
    <property type="entry name" value="30S ribosomal protein S5"/>
    <property type="match status" value="1"/>
</dbReference>
<dbReference type="Gene3D" id="3.30.160.20">
    <property type="match status" value="1"/>
</dbReference>
<dbReference type="Gene3D" id="3.30.230.10">
    <property type="match status" value="1"/>
</dbReference>
<dbReference type="HAMAP" id="MF_01307_B">
    <property type="entry name" value="Ribosomal_uS5_B"/>
    <property type="match status" value="1"/>
</dbReference>
<dbReference type="InterPro" id="IPR020568">
    <property type="entry name" value="Ribosomal_Su5_D2-typ_SF"/>
</dbReference>
<dbReference type="InterPro" id="IPR000851">
    <property type="entry name" value="Ribosomal_uS5"/>
</dbReference>
<dbReference type="InterPro" id="IPR005712">
    <property type="entry name" value="Ribosomal_uS5_bac-type"/>
</dbReference>
<dbReference type="InterPro" id="IPR005324">
    <property type="entry name" value="Ribosomal_uS5_C"/>
</dbReference>
<dbReference type="InterPro" id="IPR013810">
    <property type="entry name" value="Ribosomal_uS5_N"/>
</dbReference>
<dbReference type="InterPro" id="IPR018192">
    <property type="entry name" value="Ribosomal_uS5_N_CS"/>
</dbReference>
<dbReference type="InterPro" id="IPR014721">
    <property type="entry name" value="Ribsml_uS5_D2-typ_fold_subgr"/>
</dbReference>
<dbReference type="NCBIfam" id="TIGR01021">
    <property type="entry name" value="rpsE_bact"/>
    <property type="match status" value="1"/>
</dbReference>
<dbReference type="PANTHER" id="PTHR48277">
    <property type="entry name" value="MITOCHONDRIAL RIBOSOMAL PROTEIN S5"/>
    <property type="match status" value="1"/>
</dbReference>
<dbReference type="PANTHER" id="PTHR48277:SF1">
    <property type="entry name" value="MITOCHONDRIAL RIBOSOMAL PROTEIN S5"/>
    <property type="match status" value="1"/>
</dbReference>
<dbReference type="Pfam" id="PF00333">
    <property type="entry name" value="Ribosomal_S5"/>
    <property type="match status" value="1"/>
</dbReference>
<dbReference type="Pfam" id="PF03719">
    <property type="entry name" value="Ribosomal_S5_C"/>
    <property type="match status" value="1"/>
</dbReference>
<dbReference type="SUPFAM" id="SSF54768">
    <property type="entry name" value="dsRNA-binding domain-like"/>
    <property type="match status" value="1"/>
</dbReference>
<dbReference type="SUPFAM" id="SSF54211">
    <property type="entry name" value="Ribosomal protein S5 domain 2-like"/>
    <property type="match status" value="1"/>
</dbReference>
<dbReference type="PROSITE" id="PS00585">
    <property type="entry name" value="RIBOSOMAL_S5"/>
    <property type="match status" value="1"/>
</dbReference>
<dbReference type="PROSITE" id="PS50881">
    <property type="entry name" value="S5_DSRBD"/>
    <property type="match status" value="1"/>
</dbReference>
<sequence>MMHRIDPSKLELEERVVTINRVAKVVKGGRRFRFAALVVVGDKNGHVGFGTGKAQEVPDAIRKAIEDAKKNLIAVPLVGTTIPHTINGHFGAGEVFLKPAAEGTGVIAGGPVRAVLELAGVQDILSKSLGSNTPINMIRATVNGLSELKRAEDVAKLRGKSVEELLG</sequence>
<feature type="chain" id="PRO_0000131462" description="Small ribosomal subunit protein uS5">
    <location>
        <begin position="1"/>
        <end position="167"/>
    </location>
</feature>
<feature type="domain" description="S5 DRBM" evidence="1">
    <location>
        <begin position="12"/>
        <end position="75"/>
    </location>
</feature>